<organism>
    <name type="scientific">Proteus mirabilis (strain HI4320)</name>
    <dbReference type="NCBI Taxonomy" id="529507"/>
    <lineage>
        <taxon>Bacteria</taxon>
        <taxon>Pseudomonadati</taxon>
        <taxon>Pseudomonadota</taxon>
        <taxon>Gammaproteobacteria</taxon>
        <taxon>Enterobacterales</taxon>
        <taxon>Morganellaceae</taxon>
        <taxon>Proteus</taxon>
    </lineage>
</organism>
<name>SECM_PROMH</name>
<protein>
    <recommendedName>
        <fullName evidence="1">Secretion monitor</fullName>
    </recommendedName>
</protein>
<proteinExistence type="inferred from homology"/>
<reference key="1">
    <citation type="journal article" date="2008" name="J. Bacteriol.">
        <title>Complete genome sequence of uropathogenic Proteus mirabilis, a master of both adherence and motility.</title>
        <authorList>
            <person name="Pearson M.M."/>
            <person name="Sebaihia M."/>
            <person name="Churcher C."/>
            <person name="Quail M.A."/>
            <person name="Seshasayee A.S."/>
            <person name="Luscombe N.M."/>
            <person name="Abdellah Z."/>
            <person name="Arrosmith C."/>
            <person name="Atkin B."/>
            <person name="Chillingworth T."/>
            <person name="Hauser H."/>
            <person name="Jagels K."/>
            <person name="Moule S."/>
            <person name="Mungall K."/>
            <person name="Norbertczak H."/>
            <person name="Rabbinowitsch E."/>
            <person name="Walker D."/>
            <person name="Whithead S."/>
            <person name="Thomson N.R."/>
            <person name="Rather P.N."/>
            <person name="Parkhill J."/>
            <person name="Mobley H.L.T."/>
        </authorList>
    </citation>
    <scope>NUCLEOTIDE SEQUENCE [LARGE SCALE GENOMIC DNA]</scope>
    <source>
        <strain>HI4320</strain>
    </source>
</reference>
<gene>
    <name evidence="1" type="primary">secM</name>
    <name type="ordered locus">PMI2062</name>
</gene>
<comment type="function">
    <text evidence="1">Regulates secA expression by translational coupling of the secM secA operon. Translational pausing at a specific Pro residue 5 residues before the end of the protein may allow disruption of a mRNA repressor helix that normally suppresses secA translation initiation.</text>
</comment>
<comment type="subcellular location">
    <subcellularLocation>
        <location evidence="1">Cytoplasm</location>
        <location evidence="1">Cytosol</location>
    </subcellularLocation>
    <subcellularLocation>
        <location evidence="1">Periplasm</location>
    </subcellularLocation>
    <text evidence="1">The active form is cytosolic, while the periplasmic form is rapidly degraded, mainly by the tail-specific protease.</text>
</comment>
<comment type="similarity">
    <text evidence="1">Belongs to the SecM family.</text>
</comment>
<keyword id="KW-0963">Cytoplasm</keyword>
<keyword id="KW-0574">Periplasm</keyword>
<keyword id="KW-1185">Reference proteome</keyword>
<keyword id="KW-0732">Signal</keyword>
<sequence>MSIINFWRQFGRRYFWSHLLLGMVAAGIGMPSLVSAHAENPSQTDTPSSQNRQSQALIAFDNLFLRQSVQNPASSFTFNYWQQHAVKNVIKQLSFAFTIHSPELMVKAKDEPSPVANVAEVMLDTLYALLTQAPSSTLVNLPISRGVLTENRISYHTGLWLAQIRGIRAGPYLTA</sequence>
<dbReference type="EMBL" id="AM942759">
    <property type="protein sequence ID" value="CAR44131.1"/>
    <property type="molecule type" value="Genomic_DNA"/>
</dbReference>
<dbReference type="RefSeq" id="WP_004244104.1">
    <property type="nucleotide sequence ID" value="NC_010554.1"/>
</dbReference>
<dbReference type="EnsemblBacteria" id="CAR44131">
    <property type="protein sequence ID" value="CAR44131"/>
    <property type="gene ID" value="PMI2062"/>
</dbReference>
<dbReference type="GeneID" id="6802852"/>
<dbReference type="KEGG" id="pmr:PMI2062"/>
<dbReference type="eggNOG" id="ENOG5031JGK">
    <property type="taxonomic scope" value="Bacteria"/>
</dbReference>
<dbReference type="HOGENOM" id="CLU_108853_0_0_6"/>
<dbReference type="Proteomes" id="UP000008319">
    <property type="component" value="Chromosome"/>
</dbReference>
<dbReference type="GO" id="GO:0005829">
    <property type="term" value="C:cytosol"/>
    <property type="evidence" value="ECO:0007669"/>
    <property type="project" value="UniProtKB-SubCell"/>
</dbReference>
<dbReference type="GO" id="GO:0042597">
    <property type="term" value="C:periplasmic space"/>
    <property type="evidence" value="ECO:0007669"/>
    <property type="project" value="UniProtKB-SubCell"/>
</dbReference>
<dbReference type="GO" id="GO:0045182">
    <property type="term" value="F:translation regulator activity"/>
    <property type="evidence" value="ECO:0007669"/>
    <property type="project" value="InterPro"/>
</dbReference>
<dbReference type="HAMAP" id="MF_01332">
    <property type="entry name" value="SecM"/>
    <property type="match status" value="1"/>
</dbReference>
<dbReference type="InterPro" id="IPR009502">
    <property type="entry name" value="SecM"/>
</dbReference>
<dbReference type="NCBIfam" id="NF002799">
    <property type="entry name" value="PRK02943.1-1"/>
    <property type="match status" value="1"/>
</dbReference>
<dbReference type="Pfam" id="PF06558">
    <property type="entry name" value="SecM"/>
    <property type="match status" value="1"/>
</dbReference>
<feature type="signal peptide" evidence="1">
    <location>
        <begin position="1"/>
        <end position="38"/>
    </location>
</feature>
<feature type="chain" id="PRO_1000166099" description="Secretion monitor">
    <location>
        <begin position="39"/>
        <end position="175"/>
    </location>
</feature>
<evidence type="ECO:0000255" key="1">
    <source>
        <dbReference type="HAMAP-Rule" id="MF_01332"/>
    </source>
</evidence>
<accession>B4F103</accession>